<name>MUS81_HUMAN</name>
<sequence length="551" mass="61173">MAAPVRLGRKRPLPACPNPLFVRWLTEWRDEATRSRRRTRFVFQKALRSLRRYPLPLRSGKEAKILQHFGDGLCRMLDERLQRHRTSGGDHAPDSPSGENSPAPQGRLAEVQDSSMPVPAQPKAGGSGSYWPARHSGARVILLVLYREHLNPNGHHFLTKEELLQRCAQKSPRVAPGSARPWPALRSLLHRNLVLRTHQPARYSLTPEGLELAQKLAESEGLSLLNVGIGPKEPPGEETAVPGAASAELASEAGVQQQPLELRPGEYRVLLCVDIGETRGGGHRPELLRELQRLHVTHTVRKLHVGDFVWVAQETNPRDPANPGELVLDHIVERKRLDDLCSSIIDGRFREQKFRLKRCGLERRVYLVEEHGSVHNLSLPESTLLQAVTNTQVIDGFFVKRTADIKESAAYLALLTRGLQRLYQGHTLRSRPWGTPGNPESGAMTSPNPLCSLLTFSDFNAGAIKNKAQSVREVFARQLMQVRGVSGEKAAALVDRYSTPASLLAAYDACATPKEQETLLSTIKCGRLQRNLGPALSRTLSQLYCSYGPLT</sequence>
<accession>Q96NY9</accession>
<accession>Q9H7D9</accession>
<keyword id="KW-0002">3D-structure</keyword>
<keyword id="KW-0227">DNA damage</keyword>
<keyword id="KW-0233">DNA recombination</keyword>
<keyword id="KW-0234">DNA repair</keyword>
<keyword id="KW-0255">Endonuclease</keyword>
<keyword id="KW-0378">Hydrolase</keyword>
<keyword id="KW-0460">Magnesium</keyword>
<keyword id="KW-0479">Metal-binding</keyword>
<keyword id="KW-0540">Nuclease</keyword>
<keyword id="KW-0539">Nucleus</keyword>
<keyword id="KW-0597">Phosphoprotein</keyword>
<keyword id="KW-1267">Proteomics identification</keyword>
<keyword id="KW-1185">Reference proteome</keyword>
<feature type="chain" id="PRO_0000198858" description="Structure-specific endonuclease subunit MUS81">
    <location>
        <begin position="1"/>
        <end position="551"/>
    </location>
</feature>
<feature type="domain" description="ERCC4" evidence="1">
    <location>
        <begin position="270"/>
        <end position="372"/>
    </location>
</feature>
<feature type="region of interest" description="Disordered" evidence="2">
    <location>
        <begin position="84"/>
        <end position="130"/>
    </location>
</feature>
<feature type="region of interest" description="Interaction with BLM" evidence="11">
    <location>
        <begin position="125"/>
        <end position="244"/>
    </location>
</feature>
<feature type="region of interest" description="Winged helix domain (WHD); critical for endonuclease activity" evidence="21">
    <location>
        <begin position="131"/>
        <end position="230"/>
    </location>
</feature>
<feature type="region of interest" description="Helix-hairpin-helix (2HhH); involved in DNA recognition and bending" evidence="18 21">
    <location>
        <begin position="471"/>
        <end position="545"/>
    </location>
</feature>
<feature type="compositionally biased region" description="Basic and acidic residues" evidence="2">
    <location>
        <begin position="84"/>
        <end position="93"/>
    </location>
</feature>
<feature type="active site" evidence="18 21">
    <location>
        <position position="274"/>
    </location>
</feature>
<feature type="active site" evidence="18 21">
    <location>
        <position position="277"/>
    </location>
</feature>
<feature type="active site" evidence="18 21">
    <location>
        <position position="307"/>
    </location>
</feature>
<feature type="binding site" evidence="18 22 27 33 35">
    <location>
        <position position="274"/>
    </location>
    <ligand>
        <name>Mg(2+)</name>
        <dbReference type="ChEBI" id="CHEBI:18420"/>
        <label>1</label>
    </ligand>
</feature>
<feature type="binding site" evidence="18 22 27 35">
    <location>
        <position position="277"/>
    </location>
    <ligand>
        <name>Mg(2+)</name>
        <dbReference type="ChEBI" id="CHEBI:18420"/>
        <label>1</label>
    </ligand>
</feature>
<feature type="binding site" evidence="18 22 27 35">
    <location>
        <position position="277"/>
    </location>
    <ligand>
        <name>Mg(2+)</name>
        <dbReference type="ChEBI" id="CHEBI:18420"/>
        <label>2</label>
    </ligand>
</feature>
<feature type="binding site" evidence="18 22 27 35">
    <location>
        <position position="307"/>
    </location>
    <ligand>
        <name>Mg(2+)</name>
        <dbReference type="ChEBI" id="CHEBI:18420"/>
        <label>1</label>
    </ligand>
</feature>
<feature type="binding site" evidence="18 22 27 35">
    <location>
        <position position="307"/>
    </location>
    <ligand>
        <name>Mg(2+)</name>
        <dbReference type="ChEBI" id="CHEBI:18420"/>
        <label>2</label>
    </ligand>
</feature>
<feature type="binding site" evidence="22 35">
    <location>
        <position position="333"/>
    </location>
    <ligand>
        <name>Mg(2+)</name>
        <dbReference type="ChEBI" id="CHEBI:18420"/>
        <label>1</label>
    </ligand>
</feature>
<feature type="binding site" evidence="22 35">
    <location>
        <position position="333"/>
    </location>
    <ligand>
        <name>Mg(2+)</name>
        <dbReference type="ChEBI" id="CHEBI:18420"/>
        <label>2</label>
    </ligand>
</feature>
<feature type="binding site" evidence="22 35">
    <location>
        <position position="334"/>
    </location>
    <ligand>
        <name>Mg(2+)</name>
        <dbReference type="ChEBI" id="CHEBI:18420"/>
        <label>2</label>
    </ligand>
</feature>
<feature type="modified residue" description="Phosphoserine" evidence="38">
    <location>
        <position position="95"/>
    </location>
</feature>
<feature type="modified residue" description="Phosphoserine" evidence="38">
    <location>
        <position position="101"/>
    </location>
</feature>
<feature type="sequence variant" id="VAR_025340" description="In dbSNP:rs13817." evidence="3 9 10">
    <original>R</original>
    <variation>H</variation>
    <location>
        <position position="37"/>
    </location>
</feature>
<feature type="sequence variant" id="VAR_061988" description="In dbSNP:rs34381357.">
    <original>S</original>
    <variation>F</variation>
    <location>
        <position position="115"/>
    </location>
</feature>
<feature type="sequence variant" id="VAR_038521" description="In dbSNP:rs545500." evidence="3 9 10">
    <original>R</original>
    <variation>P</variation>
    <location>
        <position position="180"/>
    </location>
</feature>
<feature type="sequence variant" id="VAR_021990" description="In dbSNP:rs2298447.">
    <original>L</original>
    <variation>F</variation>
    <location>
        <position position="189"/>
    </location>
</feature>
<feature type="sequence variant" id="VAR_038522" description="In dbSNP:rs34891773.">
    <original>R</original>
    <variation>W</variation>
    <location>
        <position position="350"/>
    </location>
</feature>
<feature type="sequence variant" id="VAR_025341" description="In dbSNP:rs765593.">
    <original>Q</original>
    <variation>H</variation>
    <location>
        <position position="481"/>
    </location>
</feature>
<feature type="mutagenesis site" description="Reduced 5 prime flap and nHJ cleavages but only mild effect on the cleavage of 3 prime flap; when associated with E-191." evidence="21">
    <original>R</original>
    <variation>E</variation>
    <location>
        <position position="186"/>
    </location>
</feature>
<feature type="mutagenesis site" description="Reduced 5 prime flap and nHJ cleavages but only mild effect on the cleavage of 3 prime flap; when associated with E-186." evidence="21">
    <original>R</original>
    <variation>E</variation>
    <location>
        <position position="191"/>
    </location>
</feature>
<feature type="mutagenesis site" description="Loss of endonuclease activity." evidence="18 21">
    <original>D</original>
    <variation>A</variation>
    <location>
        <position position="274"/>
    </location>
</feature>
<feature type="mutagenesis site" description="Loss of endonuclease activity." evidence="18 21">
    <original>E</original>
    <variation>A</variation>
    <location>
        <position position="277"/>
    </location>
</feature>
<feature type="mutagenesis site" description="Loss of endonuclease activity." evidence="3">
    <original>GD</original>
    <variation>AE</variation>
    <location>
        <begin position="306"/>
        <end position="307"/>
    </location>
</feature>
<feature type="mutagenesis site" description="Loss of endonuclease activity." evidence="18 21">
    <original>D</original>
    <variation>A</variation>
    <location>
        <position position="307"/>
    </location>
</feature>
<feature type="mutagenesis site" description="Loss of endonuclease activity." evidence="3">
    <original>ER</original>
    <variation>AG</variation>
    <location>
        <begin position="333"/>
        <end position="334"/>
    </location>
</feature>
<feature type="mutagenesis site" description="Loss of endonuclease activity." evidence="3 7">
    <original>DD</original>
    <variation>AA</variation>
    <location>
        <begin position="338"/>
        <end position="339"/>
    </location>
</feature>
<feature type="mutagenesis site" description="Decreased endonuclease activity; when associated R-345." evidence="18">
    <original>I</original>
    <variation>R</variation>
    <location>
        <position position="344"/>
    </location>
</feature>
<feature type="mutagenesis site" description="Decreased endonuclease activity; when associated R-344." evidence="18">
    <original>I</original>
    <variation>R</variation>
    <location>
        <position position="345"/>
    </location>
</feature>
<feature type="mutagenesis site" description="Reduced 3 prime flap and nHJ cleavage and loss of 5 prime flap cleavage." evidence="21">
    <original>R</original>
    <variation>E</variation>
    <location>
        <position position="348"/>
    </location>
</feature>
<feature type="mutagenesis site" description="Reduced 3 prime flap and nHJ cleavage and loss of 5 prime flap cleavage." evidence="21">
    <original>R</original>
    <variation>E</variation>
    <location>
        <position position="355"/>
    </location>
</feature>
<feature type="mutagenesis site" description="Decreased endonuclease activity; when associated with R-387." evidence="18">
    <original>T</original>
    <variation>R</variation>
    <location>
        <position position="383"/>
    </location>
</feature>
<feature type="mutagenesis site" description="Decreased endonuclease activity; when associated with R-383." evidence="18">
    <original>A</original>
    <variation>R</variation>
    <location>
        <position position="387"/>
    </location>
</feature>
<feature type="mutagenesis site" description="Loss of endonuclease activity; when associated with A-489 and A-530." evidence="18">
    <original>R</original>
    <variation>A</variation>
    <location>
        <position position="483"/>
    </location>
</feature>
<feature type="mutagenesis site" description="Loss of endonuclease activity; when associated with A-483 and A-530." evidence="18">
    <original>K</original>
    <variation>A</variation>
    <location>
        <position position="489"/>
    </location>
</feature>
<feature type="mutagenesis site" description="Decreased endonuclease activity. Loss of endonuclease activity; when associated with A-483 and A-489." evidence="18">
    <original>R</original>
    <variation>A</variation>
    <location>
        <position position="530"/>
    </location>
</feature>
<feature type="strand" evidence="42">
    <location>
        <begin position="7"/>
        <end position="10"/>
    </location>
</feature>
<feature type="helix" evidence="42">
    <location>
        <begin position="19"/>
        <end position="34"/>
    </location>
</feature>
<feature type="helix" evidence="42">
    <location>
        <begin position="40"/>
        <end position="50"/>
    </location>
</feature>
<feature type="helix" evidence="42">
    <location>
        <begin position="62"/>
        <end position="65"/>
    </location>
</feature>
<feature type="helix" evidence="42">
    <location>
        <begin position="71"/>
        <end position="86"/>
    </location>
</feature>
<feature type="helix" evidence="39">
    <location>
        <begin position="137"/>
        <end position="149"/>
    </location>
</feature>
<feature type="helix" evidence="39">
    <location>
        <begin position="152"/>
        <end position="154"/>
    </location>
</feature>
<feature type="helix" evidence="39">
    <location>
        <begin position="160"/>
        <end position="170"/>
    </location>
</feature>
<feature type="helix" evidence="39">
    <location>
        <begin position="184"/>
        <end position="190"/>
    </location>
</feature>
<feature type="strand" evidence="39">
    <location>
        <begin position="193"/>
        <end position="195"/>
    </location>
</feature>
<feature type="strand" evidence="39">
    <location>
        <begin position="198"/>
        <end position="200"/>
    </location>
</feature>
<feature type="strand" evidence="39">
    <location>
        <begin position="203"/>
        <end position="205"/>
    </location>
</feature>
<feature type="helix" evidence="39">
    <location>
        <begin position="207"/>
        <end position="219"/>
    </location>
</feature>
<feature type="turn" evidence="39">
    <location>
        <begin position="220"/>
        <end position="222"/>
    </location>
</feature>
<feature type="strand" evidence="39">
    <location>
        <begin position="224"/>
        <end position="226"/>
    </location>
</feature>
<feature type="strand" evidence="43">
    <location>
        <begin position="266"/>
        <end position="274"/>
    </location>
</feature>
<feature type="helix" evidence="43">
    <location>
        <begin position="276"/>
        <end position="278"/>
    </location>
</feature>
<feature type="helix" evidence="43">
    <location>
        <begin position="284"/>
        <end position="293"/>
    </location>
</feature>
<feature type="strand" evidence="43">
    <location>
        <begin position="298"/>
        <end position="301"/>
    </location>
</feature>
<feature type="strand" evidence="43">
    <location>
        <begin position="307"/>
        <end position="316"/>
    </location>
</feature>
<feature type="strand" evidence="43">
    <location>
        <begin position="325"/>
        <end position="336"/>
    </location>
</feature>
<feature type="helix" evidence="43">
    <location>
        <begin position="337"/>
        <end position="345"/>
    </location>
</feature>
<feature type="helix" evidence="43">
    <location>
        <begin position="349"/>
        <end position="357"/>
    </location>
</feature>
<feature type="turn" evidence="40">
    <location>
        <begin position="358"/>
        <end position="360"/>
    </location>
</feature>
<feature type="strand" evidence="43">
    <location>
        <begin position="363"/>
        <end position="369"/>
    </location>
</feature>
<feature type="turn" evidence="43">
    <location>
        <begin position="370"/>
        <end position="373"/>
    </location>
</feature>
<feature type="helix" evidence="43">
    <location>
        <begin position="381"/>
        <end position="393"/>
    </location>
</feature>
<feature type="strand" evidence="43">
    <location>
        <begin position="398"/>
        <end position="404"/>
    </location>
</feature>
<feature type="helix" evidence="43">
    <location>
        <begin position="405"/>
        <end position="422"/>
    </location>
</feature>
<feature type="turn" evidence="43">
    <location>
        <begin position="423"/>
        <end position="425"/>
    </location>
</feature>
<feature type="strand" evidence="43">
    <location>
        <begin position="428"/>
        <end position="430"/>
    </location>
</feature>
<feature type="strand" evidence="41">
    <location>
        <begin position="452"/>
        <end position="455"/>
    </location>
</feature>
<feature type="helix" evidence="43">
    <location>
        <begin position="456"/>
        <end position="459"/>
    </location>
</feature>
<feature type="helix" evidence="40">
    <location>
        <begin position="462"/>
        <end position="464"/>
    </location>
</feature>
<feature type="turn" evidence="40">
    <location>
        <begin position="465"/>
        <end position="467"/>
    </location>
</feature>
<feature type="helix" evidence="41">
    <location>
        <begin position="471"/>
        <end position="479"/>
    </location>
</feature>
<feature type="helix" evidence="41">
    <location>
        <begin position="487"/>
        <end position="496"/>
    </location>
</feature>
<feature type="helix" evidence="41">
    <location>
        <begin position="500"/>
        <end position="509"/>
    </location>
</feature>
<feature type="helix" evidence="41">
    <location>
        <begin position="513"/>
        <end position="517"/>
    </location>
</feature>
<feature type="turn" evidence="41">
    <location>
        <begin position="518"/>
        <end position="522"/>
    </location>
</feature>
<feature type="turn" evidence="41">
    <location>
        <begin position="526"/>
        <end position="529"/>
    </location>
</feature>
<feature type="helix" evidence="41">
    <location>
        <begin position="535"/>
        <end position="545"/>
    </location>
</feature>
<comment type="function">
    <text evidence="3 4 5 6 7 11 17 18 19 21 22">Catalytic subunit of two functionally distinct, structure-specific, heterodimeric DNA endonucleases MUS81-EME1 and MUS81-EME2 that are involved in the maintenance of genome stability (PubMed:11741546, PubMed:12374758, PubMed:12686547, PubMed:12721304, PubMed:24371268, PubMed:24733841, PubMed:24813886, PubMed:35290797, PubMed:39015284). Both endonucleases have essentially the same substrate specificity though MUS81-EME2 is more active than its MUS81-EME1 counterpart. Both cleave 3'-flaps and nicked Holliday junctions, and exhibit limited endonuclease activity with 5' flaps and nicked double-stranded DNAs (PubMed:24371268, PubMed:24733841, PubMed:35290797). MUS81-EME2 which is active during the replication of DNA is more specifically involved in replication fork processing (PubMed:24813886). Replication forks frequently encounter obstacles to their passage, including DNA base lesions, DNA interstrand cross-links, difficult-to-replicate sequences, transcription bubbles, or tightly bound proteins. One mechanism for the restart of a stalled replication fork involves nucleolytic cleavage mediated by the MUS81-EME2 endonuclease. By acting upon the stalled fork, MUS81-EME2 generates a DNA double-strand break (DSB) that can be repaired by homologous recombination, leading to the restoration of an active fork (PubMed:24813886). MUS81-EME2 could also function in telomere maintenance (PubMed:24813886). MUS81-EME1, on the other hand, is active later in the cell cycle and functions in the resolution of mitotic recombination intermediates including the Holliday junctions, the four-way DNA intermediates that form during homologous recombination (PubMed:11741546, PubMed:12374758, PubMed:14617801, PubMed:15805243, PubMed:24813886).</text>
</comment>
<comment type="cofactor">
    <cofactor evidence="3 18 22">
        <name>Mg(2+)</name>
        <dbReference type="ChEBI" id="CHEBI:18420"/>
    </cofactor>
</comment>
<comment type="subunit">
    <text evidence="3 5 6 7 11 12 13 14 15 16 19 20 21 22">Part of the heterodimeric DNA structure-specific endonuclease complex MUS81-EME1 (PubMed:12686547, PubMed:12721304, PubMed:14617801, PubMed:17289582, PubMed:35290797, PubMed:39015284). Part of the heterodimeric DNA structure-specific endonuclease complex MUS81-EME2 (PubMed:17289582, PubMed:24813886, PubMed:35290797). Interacts with BLM; may stimulate the endonuclease activity of MUS81 (PubMed:15805243). Interacts with SLX4/BTBD12; this interaction is direct and links the MUS81-EME1 complex to SLX4, which may coordinate the action of the structure-specific endonuclease during DNA repair (PubMed:19595721, PubMed:19596235, PubMed:19596236). Interacts with DCLRE1B/Apollo (PubMed:18469862). Interacts with RECQL5; this interaction stimulates mitotic DNA synthesis (PubMed:28575661). Interacts with CHEK2 (PubMed:11741546).</text>
</comment>
<comment type="interaction">
    <interactant intactId="EBI-2370806">
        <id>Q96NY9</id>
    </interactant>
    <interactant intactId="EBI-2370825">
        <id>Q96AY2</id>
        <label>EME1</label>
    </interactant>
    <organismsDiffer>false</organismsDiffer>
    <experiments>11</experiments>
</comment>
<comment type="interaction">
    <interactant intactId="EBI-2370806">
        <id>Q96NY9</id>
    </interactant>
    <interactant intactId="EBI-7838486">
        <id>A4GXA9</id>
        <label>EME2</label>
    </interactant>
    <organismsDiffer>false</organismsDiffer>
    <experiments>3</experiments>
</comment>
<comment type="interaction">
    <interactant intactId="EBI-2370806">
        <id>Q96NY9</id>
    </interactant>
    <interactant intactId="EBI-707816">
        <id>P39748</id>
        <label>FEN1</label>
    </interactant>
    <organismsDiffer>false</organismsDiffer>
    <experiments>5</experiments>
</comment>
<comment type="interaction">
    <interactant intactId="EBI-2370806">
        <id>Q96NY9</id>
    </interactant>
    <interactant intactId="EBI-2370740">
        <id>Q8IY92</id>
        <label>SLX4</label>
    </interactant>
    <organismsDiffer>false</organismsDiffer>
    <experiments>13</experiments>
</comment>
<comment type="subcellular location">
    <subcellularLocation>
        <location evidence="3 7 8 11">Nucleus</location>
        <location evidence="3 7 8 11">Nucleolus</location>
    </subcellularLocation>
    <text evidence="8">Recruited to foci of DNA damage in S-phase cells.</text>
</comment>
<comment type="tissue specificity">
    <text evidence="3">Widely expressed.</text>
</comment>
<comment type="developmental stage">
    <text evidence="8">Expressed in S phase and G2 phase.</text>
</comment>
<comment type="induction">
    <text evidence="3">Up-regulated in cells treated with agents that damage DNA or block replication. This up-regulation seems to be independent of transcription.</text>
</comment>
<comment type="similarity">
    <text evidence="24">Belongs to the XPF family.</text>
</comment>
<comment type="sequence caution" evidence="24">
    <conflict type="erroneous initiation">
        <sequence resource="EMBL-CDS" id="BAB14953"/>
    </conflict>
</comment>
<dbReference type="EC" id="3.1.22.-" evidence="21"/>
<dbReference type="EMBL" id="AF425646">
    <property type="protein sequence ID" value="AAL28065.1"/>
    <property type="molecule type" value="mRNA"/>
</dbReference>
<dbReference type="EMBL" id="BC009999">
    <property type="protein sequence ID" value="AAH09999.2"/>
    <property type="molecule type" value="mRNA"/>
</dbReference>
<dbReference type="EMBL" id="AK024665">
    <property type="protein sequence ID" value="BAB14953.1"/>
    <property type="status" value="ALT_INIT"/>
    <property type="molecule type" value="mRNA"/>
</dbReference>
<dbReference type="CCDS" id="CCDS8115.1"/>
<dbReference type="RefSeq" id="NP_079404.3">
    <property type="nucleotide sequence ID" value="NM_025128.4"/>
</dbReference>
<dbReference type="RefSeq" id="XP_011543572.1">
    <property type="nucleotide sequence ID" value="XM_011545270.2"/>
</dbReference>
<dbReference type="PDB" id="2MC3">
    <property type="method" value="NMR"/>
    <property type="chains" value="A=127-230"/>
</dbReference>
<dbReference type="PDB" id="2ZIX">
    <property type="method" value="X-ray"/>
    <property type="resolution" value="3.50 A"/>
    <property type="chains" value="A=246-551"/>
</dbReference>
<dbReference type="PDB" id="4P0P">
    <property type="method" value="X-ray"/>
    <property type="resolution" value="2.80 A"/>
    <property type="chains" value="A=246-551"/>
</dbReference>
<dbReference type="PDB" id="4P0Q">
    <property type="method" value="X-ray"/>
    <property type="resolution" value="2.85 A"/>
    <property type="chains" value="A=246-551"/>
</dbReference>
<dbReference type="PDB" id="4P0R">
    <property type="method" value="X-ray"/>
    <property type="resolution" value="6.50 A"/>
    <property type="chains" value="A/C=246-551"/>
</dbReference>
<dbReference type="PDB" id="4P0S">
    <property type="method" value="X-ray"/>
    <property type="resolution" value="6.00 A"/>
    <property type="chains" value="A/C/E/G=246-551"/>
</dbReference>
<dbReference type="PDB" id="6VWB">
    <property type="method" value="NMR"/>
    <property type="chains" value="A=2-90"/>
</dbReference>
<dbReference type="PDB" id="7BU5">
    <property type="method" value="X-ray"/>
    <property type="resolution" value="1.80 A"/>
    <property type="chains" value="A=2-99"/>
</dbReference>
<dbReference type="PDB" id="7F6L">
    <property type="method" value="X-ray"/>
    <property type="resolution" value="3.20 A"/>
    <property type="chains" value="A=246-551"/>
</dbReference>
<dbReference type="PDB" id="9F98">
    <property type="method" value="X-ray"/>
    <property type="resolution" value="2.15 A"/>
    <property type="chains" value="A/C=246-551"/>
</dbReference>
<dbReference type="PDB" id="9F99">
    <property type="method" value="X-ray"/>
    <property type="resolution" value="2.80 A"/>
    <property type="chains" value="A/C/E/G=246-551"/>
</dbReference>
<dbReference type="PDB" id="9F9A">
    <property type="method" value="X-ray"/>
    <property type="resolution" value="2.91 A"/>
    <property type="chains" value="A/C/E/G=246-551"/>
</dbReference>
<dbReference type="PDB" id="9F9K">
    <property type="method" value="X-ray"/>
    <property type="resolution" value="2.73 A"/>
    <property type="chains" value="A/C=246-551"/>
</dbReference>
<dbReference type="PDB" id="9F9L">
    <property type="method" value="X-ray"/>
    <property type="resolution" value="2.02 A"/>
    <property type="chains" value="A/C=246-551"/>
</dbReference>
<dbReference type="PDB" id="9F9M">
    <property type="method" value="X-ray"/>
    <property type="resolution" value="2.47 A"/>
    <property type="chains" value="A/C=246-551"/>
</dbReference>
<dbReference type="PDBsum" id="2MC3"/>
<dbReference type="PDBsum" id="2ZIX"/>
<dbReference type="PDBsum" id="4P0P"/>
<dbReference type="PDBsum" id="4P0Q"/>
<dbReference type="PDBsum" id="4P0R"/>
<dbReference type="PDBsum" id="4P0S"/>
<dbReference type="PDBsum" id="6VWB"/>
<dbReference type="PDBsum" id="7BU5"/>
<dbReference type="PDBsum" id="7F6L"/>
<dbReference type="PDBsum" id="9F98"/>
<dbReference type="PDBsum" id="9F99"/>
<dbReference type="PDBsum" id="9F9A"/>
<dbReference type="PDBsum" id="9F9K"/>
<dbReference type="PDBsum" id="9F9L"/>
<dbReference type="PDBsum" id="9F9M"/>
<dbReference type="BMRB" id="Q96NY9"/>
<dbReference type="SMR" id="Q96NY9"/>
<dbReference type="BioGRID" id="123170">
    <property type="interactions" value="115"/>
</dbReference>
<dbReference type="ComplexPortal" id="CPX-511">
    <property type="entry name" value="MUS81-EME1 structure-specific endonuclease complex"/>
</dbReference>
<dbReference type="ComplexPortal" id="CPX-586">
    <property type="entry name" value="MUS81-EME2 structure-specific endonuclease complex"/>
</dbReference>
<dbReference type="CORUM" id="Q96NY9"/>
<dbReference type="DIP" id="DIP-48630N"/>
<dbReference type="FunCoup" id="Q96NY9">
    <property type="interactions" value="1108"/>
</dbReference>
<dbReference type="IntAct" id="Q96NY9">
    <property type="interactions" value="35"/>
</dbReference>
<dbReference type="MINT" id="Q96NY9"/>
<dbReference type="STRING" id="9606.ENSP00000307853"/>
<dbReference type="BindingDB" id="Q96NY9"/>
<dbReference type="ChEMBL" id="CHEMBL5465380"/>
<dbReference type="ChEMBL" id="CHEMBL5465381"/>
<dbReference type="GlyGen" id="Q96NY9">
    <property type="glycosylation" value="1 site"/>
</dbReference>
<dbReference type="iPTMnet" id="Q96NY9"/>
<dbReference type="PhosphoSitePlus" id="Q96NY9"/>
<dbReference type="BioMuta" id="MUS81"/>
<dbReference type="DMDM" id="166898077"/>
<dbReference type="jPOST" id="Q96NY9"/>
<dbReference type="MassIVE" id="Q96NY9"/>
<dbReference type="PaxDb" id="9606-ENSP00000307853"/>
<dbReference type="PeptideAtlas" id="Q96NY9"/>
<dbReference type="ProteomicsDB" id="77579"/>
<dbReference type="Pumba" id="Q96NY9"/>
<dbReference type="Antibodypedia" id="16020">
    <property type="antibodies" value="187 antibodies from 26 providers"/>
</dbReference>
<dbReference type="DNASU" id="80198"/>
<dbReference type="Ensembl" id="ENST00000308110.9">
    <property type="protein sequence ID" value="ENSP00000307853.4"/>
    <property type="gene ID" value="ENSG00000172732.12"/>
</dbReference>
<dbReference type="GeneID" id="80198"/>
<dbReference type="KEGG" id="hsa:80198"/>
<dbReference type="MANE-Select" id="ENST00000308110.9">
    <property type="protein sequence ID" value="ENSP00000307853.4"/>
    <property type="RefSeq nucleotide sequence ID" value="NM_025128.5"/>
    <property type="RefSeq protein sequence ID" value="NP_079404.3"/>
</dbReference>
<dbReference type="UCSC" id="uc001ofv.5">
    <property type="organism name" value="human"/>
</dbReference>
<dbReference type="AGR" id="HGNC:29814"/>
<dbReference type="CTD" id="80198"/>
<dbReference type="DisGeNET" id="80198"/>
<dbReference type="GeneCards" id="MUS81"/>
<dbReference type="HGNC" id="HGNC:29814">
    <property type="gene designation" value="MUS81"/>
</dbReference>
<dbReference type="HPA" id="ENSG00000172732">
    <property type="expression patterns" value="Low tissue specificity"/>
</dbReference>
<dbReference type="MalaCards" id="MUS81"/>
<dbReference type="MIM" id="606591">
    <property type="type" value="gene"/>
</dbReference>
<dbReference type="neXtProt" id="NX_Q96NY9"/>
<dbReference type="OpenTargets" id="ENSG00000172732"/>
<dbReference type="PharmGKB" id="PA134881809"/>
<dbReference type="VEuPathDB" id="HostDB:ENSG00000172732"/>
<dbReference type="eggNOG" id="KOG2379">
    <property type="taxonomic scope" value="Eukaryota"/>
</dbReference>
<dbReference type="GeneTree" id="ENSGT00390000005498"/>
<dbReference type="HOGENOM" id="CLU_014329_3_0_1"/>
<dbReference type="InParanoid" id="Q96NY9"/>
<dbReference type="OMA" id="ELGDAMW"/>
<dbReference type="OrthoDB" id="5963188at2759"/>
<dbReference type="PAN-GO" id="Q96NY9">
    <property type="GO annotations" value="6 GO annotations based on evolutionary models"/>
</dbReference>
<dbReference type="PhylomeDB" id="Q96NY9"/>
<dbReference type="TreeFam" id="TF315113"/>
<dbReference type="BRENDA" id="3.1.21.10">
    <property type="organism ID" value="2681"/>
</dbReference>
<dbReference type="PathwayCommons" id="Q96NY9"/>
<dbReference type="Reactome" id="R-HSA-5693568">
    <property type="pathway name" value="Resolution of D-loop Structures through Holliday Junction Intermediates"/>
</dbReference>
<dbReference type="Reactome" id="R-HSA-6783310">
    <property type="pathway name" value="Fanconi Anemia Pathway"/>
</dbReference>
<dbReference type="SignaLink" id="Q96NY9"/>
<dbReference type="SIGNOR" id="Q96NY9"/>
<dbReference type="BioGRID-ORCS" id="80198">
    <property type="hits" value="73 hits in 1159 CRISPR screens"/>
</dbReference>
<dbReference type="CD-CODE" id="91857CE7">
    <property type="entry name" value="Nucleolus"/>
</dbReference>
<dbReference type="ChiTaRS" id="MUS81">
    <property type="organism name" value="human"/>
</dbReference>
<dbReference type="EvolutionaryTrace" id="Q96NY9"/>
<dbReference type="GeneWiki" id="MUS81"/>
<dbReference type="GenomeRNAi" id="80198"/>
<dbReference type="Pharos" id="Q96NY9">
    <property type="development level" value="Tbio"/>
</dbReference>
<dbReference type="PRO" id="PR:Q96NY9"/>
<dbReference type="Proteomes" id="UP000005640">
    <property type="component" value="Chromosome 11"/>
</dbReference>
<dbReference type="RNAct" id="Q96NY9">
    <property type="molecule type" value="protein"/>
</dbReference>
<dbReference type="Bgee" id="ENSG00000172732">
    <property type="expression patterns" value="Expressed in body of uterus and 200 other cell types or tissues"/>
</dbReference>
<dbReference type="ExpressionAtlas" id="Q96NY9">
    <property type="expression patterns" value="baseline and differential"/>
</dbReference>
<dbReference type="GO" id="GO:1905347">
    <property type="term" value="C:endodeoxyribonuclease complex"/>
    <property type="evidence" value="ECO:0000353"/>
    <property type="project" value="ComplexPortal"/>
</dbReference>
<dbReference type="GO" id="GO:0048476">
    <property type="term" value="C:Holliday junction resolvase complex"/>
    <property type="evidence" value="ECO:0000318"/>
    <property type="project" value="GO_Central"/>
</dbReference>
<dbReference type="GO" id="GO:0043596">
    <property type="term" value="C:nuclear replication fork"/>
    <property type="evidence" value="ECO:0000303"/>
    <property type="project" value="ComplexPortal"/>
</dbReference>
<dbReference type="GO" id="GO:0005730">
    <property type="term" value="C:nucleolus"/>
    <property type="evidence" value="ECO:0007669"/>
    <property type="project" value="UniProtKB-SubCell"/>
</dbReference>
<dbReference type="GO" id="GO:0005654">
    <property type="term" value="C:nucleoplasm"/>
    <property type="evidence" value="ECO:0000304"/>
    <property type="project" value="Reactome"/>
</dbReference>
<dbReference type="GO" id="GO:0005634">
    <property type="term" value="C:nucleus"/>
    <property type="evidence" value="ECO:0000318"/>
    <property type="project" value="GO_Central"/>
</dbReference>
<dbReference type="GO" id="GO:0005657">
    <property type="term" value="C:replication fork"/>
    <property type="evidence" value="ECO:0000314"/>
    <property type="project" value="UniProt"/>
</dbReference>
<dbReference type="GO" id="GO:0048257">
    <property type="term" value="F:3'-flap endonuclease activity"/>
    <property type="evidence" value="ECO:0000315"/>
    <property type="project" value="UniProtKB"/>
</dbReference>
<dbReference type="GO" id="GO:0008821">
    <property type="term" value="F:crossover junction DNA endonuclease activity"/>
    <property type="evidence" value="ECO:0007669"/>
    <property type="project" value="InterPro"/>
</dbReference>
<dbReference type="GO" id="GO:0003677">
    <property type="term" value="F:DNA binding"/>
    <property type="evidence" value="ECO:0007669"/>
    <property type="project" value="InterPro"/>
</dbReference>
<dbReference type="GO" id="GO:1990238">
    <property type="term" value="F:double-stranded DNA endonuclease activity"/>
    <property type="evidence" value="ECO:0000314"/>
    <property type="project" value="UniProtKB"/>
</dbReference>
<dbReference type="GO" id="GO:0004519">
    <property type="term" value="F:endonuclease activity"/>
    <property type="evidence" value="ECO:0000314"/>
    <property type="project" value="UniProt"/>
</dbReference>
<dbReference type="GO" id="GO:0046872">
    <property type="term" value="F:metal ion binding"/>
    <property type="evidence" value="ECO:0007669"/>
    <property type="project" value="UniProtKB-KW"/>
</dbReference>
<dbReference type="GO" id="GO:0006308">
    <property type="term" value="P:DNA catabolic process"/>
    <property type="evidence" value="ECO:0000315"/>
    <property type="project" value="MGI"/>
</dbReference>
<dbReference type="GO" id="GO:0006281">
    <property type="term" value="P:DNA repair"/>
    <property type="evidence" value="ECO:0000315"/>
    <property type="project" value="UniProtKB"/>
</dbReference>
<dbReference type="GO" id="GO:0006302">
    <property type="term" value="P:double-strand break repair"/>
    <property type="evidence" value="ECO:0000314"/>
    <property type="project" value="ComplexPortal"/>
</dbReference>
<dbReference type="GO" id="GO:0000727">
    <property type="term" value="P:double-strand break repair via break-induced replication"/>
    <property type="evidence" value="ECO:0000318"/>
    <property type="project" value="GO_Central"/>
</dbReference>
<dbReference type="GO" id="GO:0031573">
    <property type="term" value="P:mitotic intra-S DNA damage checkpoint signaling"/>
    <property type="evidence" value="ECO:0000318"/>
    <property type="project" value="GO_Central"/>
</dbReference>
<dbReference type="GO" id="GO:0033687">
    <property type="term" value="P:osteoblast proliferation"/>
    <property type="evidence" value="ECO:0000315"/>
    <property type="project" value="CACAO"/>
</dbReference>
<dbReference type="GO" id="GO:0031297">
    <property type="term" value="P:replication fork processing"/>
    <property type="evidence" value="ECO:0000314"/>
    <property type="project" value="ComplexPortal"/>
</dbReference>
<dbReference type="GO" id="GO:0000712">
    <property type="term" value="P:resolution of meiotic recombination intermediates"/>
    <property type="evidence" value="ECO:0000318"/>
    <property type="project" value="GO_Central"/>
</dbReference>
<dbReference type="GO" id="GO:0071140">
    <property type="term" value="P:resolution of mitotic recombination intermediates"/>
    <property type="evidence" value="ECO:0000315"/>
    <property type="project" value="UniProtKB"/>
</dbReference>
<dbReference type="GO" id="GO:0072429">
    <property type="term" value="P:response to intra-S DNA damage checkpoint signaling"/>
    <property type="evidence" value="ECO:0000315"/>
    <property type="project" value="MGI"/>
</dbReference>
<dbReference type="CDD" id="cd21036">
    <property type="entry name" value="WH_MUS81"/>
    <property type="match status" value="1"/>
</dbReference>
<dbReference type="CDD" id="cd20074">
    <property type="entry name" value="XPF_nuclease_Mus81"/>
    <property type="match status" value="1"/>
</dbReference>
<dbReference type="FunFam" id="1.10.10.10:FF:000371">
    <property type="entry name" value="Crossover junction endonuclease MUS81"/>
    <property type="match status" value="1"/>
</dbReference>
<dbReference type="FunFam" id="1.10.150.670:FF:000001">
    <property type="entry name" value="Crossover junction endonuclease MUS81"/>
    <property type="match status" value="1"/>
</dbReference>
<dbReference type="FunFam" id="3.40.50.10130:FF:000003">
    <property type="entry name" value="Crossover junction endonuclease MUS81"/>
    <property type="match status" value="1"/>
</dbReference>
<dbReference type="FunFam" id="1.10.150.110:FF:000001">
    <property type="entry name" value="Putative Crossover junction endonuclease MUS81"/>
    <property type="match status" value="1"/>
</dbReference>
<dbReference type="Gene3D" id="3.40.50.10130">
    <property type="match status" value="1"/>
</dbReference>
<dbReference type="Gene3D" id="1.10.150.670">
    <property type="entry name" value="Crossover junction endonuclease EME1, DNA-binding domain"/>
    <property type="match status" value="1"/>
</dbReference>
<dbReference type="Gene3D" id="1.10.150.110">
    <property type="entry name" value="DNA polymerase beta, N-terminal domain-like"/>
    <property type="match status" value="1"/>
</dbReference>
<dbReference type="Gene3D" id="1.10.10.10">
    <property type="entry name" value="Winged helix-like DNA-binding domain superfamily/Winged helix DNA-binding domain"/>
    <property type="match status" value="1"/>
</dbReference>
<dbReference type="IDEAL" id="IID00098"/>
<dbReference type="InterPro" id="IPR027421">
    <property type="entry name" value="DNA_pol_lamdba_lyase_dom_sf"/>
</dbReference>
<dbReference type="InterPro" id="IPR042530">
    <property type="entry name" value="EME1/EME2_C"/>
</dbReference>
<dbReference type="InterPro" id="IPR006166">
    <property type="entry name" value="ERCC4_domain"/>
</dbReference>
<dbReference type="InterPro" id="IPR033309">
    <property type="entry name" value="Mus81"/>
</dbReference>
<dbReference type="InterPro" id="IPR011335">
    <property type="entry name" value="Restrct_endonuc-II-like"/>
</dbReference>
<dbReference type="InterPro" id="IPR036388">
    <property type="entry name" value="WH-like_DNA-bd_sf"/>
</dbReference>
<dbReference type="InterPro" id="IPR047417">
    <property type="entry name" value="WH_MUS81"/>
</dbReference>
<dbReference type="InterPro" id="IPR047416">
    <property type="entry name" value="XPF_nuclease_Mus81"/>
</dbReference>
<dbReference type="PANTHER" id="PTHR13451">
    <property type="entry name" value="CLASS II CROSSOVER JUNCTION ENDONUCLEASE MUS81"/>
    <property type="match status" value="1"/>
</dbReference>
<dbReference type="PANTHER" id="PTHR13451:SF0">
    <property type="entry name" value="CROSSOVER JUNCTION ENDONUCLEASE MUS81"/>
    <property type="match status" value="1"/>
</dbReference>
<dbReference type="Pfam" id="PF21292">
    <property type="entry name" value="EME1-MUS81_C"/>
    <property type="match status" value="1"/>
</dbReference>
<dbReference type="Pfam" id="PF02732">
    <property type="entry name" value="ERCC4"/>
    <property type="match status" value="1"/>
</dbReference>
<dbReference type="Pfam" id="PF21136">
    <property type="entry name" value="MUS81-like_WH"/>
    <property type="match status" value="1"/>
</dbReference>
<dbReference type="SMART" id="SM00891">
    <property type="entry name" value="ERCC4"/>
    <property type="match status" value="1"/>
</dbReference>
<dbReference type="SUPFAM" id="SSF47802">
    <property type="entry name" value="DNA polymerase beta, N-terminal domain-like"/>
    <property type="match status" value="1"/>
</dbReference>
<dbReference type="SUPFAM" id="SSF52980">
    <property type="entry name" value="Restriction endonuclease-like"/>
    <property type="match status" value="1"/>
</dbReference>
<evidence type="ECO:0000255" key="1"/>
<evidence type="ECO:0000256" key="2">
    <source>
        <dbReference type="SAM" id="MobiDB-lite"/>
    </source>
</evidence>
<evidence type="ECO:0000269" key="3">
    <source>
    </source>
</evidence>
<evidence type="ECO:0000269" key="4">
    <source>
    </source>
</evidence>
<evidence type="ECO:0000269" key="5">
    <source>
    </source>
</evidence>
<evidence type="ECO:0000269" key="6">
    <source>
    </source>
</evidence>
<evidence type="ECO:0000269" key="7">
    <source>
    </source>
</evidence>
<evidence type="ECO:0000269" key="8">
    <source>
    </source>
</evidence>
<evidence type="ECO:0000269" key="9">
    <source>
    </source>
</evidence>
<evidence type="ECO:0000269" key="10">
    <source>
    </source>
</evidence>
<evidence type="ECO:0000269" key="11">
    <source>
    </source>
</evidence>
<evidence type="ECO:0000269" key="12">
    <source>
    </source>
</evidence>
<evidence type="ECO:0000269" key="13">
    <source>
    </source>
</evidence>
<evidence type="ECO:0000269" key="14">
    <source>
    </source>
</evidence>
<evidence type="ECO:0000269" key="15">
    <source>
    </source>
</evidence>
<evidence type="ECO:0000269" key="16">
    <source>
    </source>
</evidence>
<evidence type="ECO:0000269" key="17">
    <source>
    </source>
</evidence>
<evidence type="ECO:0000269" key="18">
    <source>
    </source>
</evidence>
<evidence type="ECO:0000269" key="19">
    <source>
    </source>
</evidence>
<evidence type="ECO:0000269" key="20">
    <source>
    </source>
</evidence>
<evidence type="ECO:0000269" key="21">
    <source>
    </source>
</evidence>
<evidence type="ECO:0000269" key="22">
    <source>
    </source>
</evidence>
<evidence type="ECO:0000303" key="23">
    <source>
    </source>
</evidence>
<evidence type="ECO:0000305" key="24"/>
<evidence type="ECO:0000305" key="25">
    <source>
    </source>
</evidence>
<evidence type="ECO:0000312" key="26">
    <source>
        <dbReference type="HGNC" id="HGNC:29814"/>
    </source>
</evidence>
<evidence type="ECO:0007744" key="27">
    <source>
        <dbReference type="PDB" id="4P0P"/>
    </source>
</evidence>
<evidence type="ECO:0007744" key="28">
    <source>
        <dbReference type="PDB" id="4P0Q"/>
    </source>
</evidence>
<evidence type="ECO:0007744" key="29">
    <source>
        <dbReference type="PDB" id="4P0R"/>
    </source>
</evidence>
<evidence type="ECO:0007744" key="30">
    <source>
        <dbReference type="PDB" id="4P0S"/>
    </source>
</evidence>
<evidence type="ECO:0007744" key="31">
    <source>
        <dbReference type="PDB" id="7F6L"/>
    </source>
</evidence>
<evidence type="ECO:0007744" key="32">
    <source>
        <dbReference type="PDB" id="9F98"/>
    </source>
</evidence>
<evidence type="ECO:0007744" key="33">
    <source>
        <dbReference type="PDB" id="9F99"/>
    </source>
</evidence>
<evidence type="ECO:0007744" key="34">
    <source>
        <dbReference type="PDB" id="9F9A"/>
    </source>
</evidence>
<evidence type="ECO:0007744" key="35">
    <source>
        <dbReference type="PDB" id="9F9K"/>
    </source>
</evidence>
<evidence type="ECO:0007744" key="36">
    <source>
        <dbReference type="PDB" id="9F9L"/>
    </source>
</evidence>
<evidence type="ECO:0007744" key="37">
    <source>
        <dbReference type="PDB" id="9F9M"/>
    </source>
</evidence>
<evidence type="ECO:0007744" key="38">
    <source>
    </source>
</evidence>
<evidence type="ECO:0007829" key="39">
    <source>
        <dbReference type="PDB" id="2MC3"/>
    </source>
</evidence>
<evidence type="ECO:0007829" key="40">
    <source>
        <dbReference type="PDB" id="2ZIX"/>
    </source>
</evidence>
<evidence type="ECO:0007829" key="41">
    <source>
        <dbReference type="PDB" id="4P0P"/>
    </source>
</evidence>
<evidence type="ECO:0007829" key="42">
    <source>
        <dbReference type="PDB" id="7BU5"/>
    </source>
</evidence>
<evidence type="ECO:0007829" key="43">
    <source>
        <dbReference type="PDB" id="9F98"/>
    </source>
</evidence>
<proteinExistence type="evidence at protein level"/>
<reference key="1">
    <citation type="journal article" date="2001" name="Mol. Cell">
        <title>Human Mus81-associated endonuclease cleaves Holliday junctions in vitro.</title>
        <authorList>
            <person name="Chen X.-B."/>
            <person name="Melchionna R."/>
            <person name="Denis C.-M."/>
            <person name="Gaillard P.-H.L."/>
            <person name="Blasina A."/>
            <person name="Van de Weyer I."/>
            <person name="Boddy M.N."/>
            <person name="Russell P."/>
            <person name="Vialard J."/>
            <person name="McGowan C.H."/>
        </authorList>
    </citation>
    <scope>NUCLEOTIDE SEQUENCE [MRNA]</scope>
    <scope>VARIANTS HIS-37 AND PRO-180</scope>
    <scope>FUNCTION</scope>
    <scope>COFACTOR</scope>
    <scope>INTERACTION WITH CHEK2</scope>
    <scope>SUBCELLULAR LOCATION</scope>
    <scope>INDUCTION</scope>
    <scope>TISSUE SPECIFICITY</scope>
    <scope>MUTAGENESIS OF 306-GLY-ASP-307; 333-GLU-ARG-334 AND 338-ASP-ASP-339</scope>
    <source>
        <tissue>Cerebellum</tissue>
    </source>
</reference>
<reference key="2">
    <citation type="journal article" date="2004" name="Genome Res.">
        <title>The status, quality, and expansion of the NIH full-length cDNA project: the Mammalian Gene Collection (MGC).</title>
        <authorList>
            <consortium name="The MGC Project Team"/>
        </authorList>
    </citation>
    <scope>NUCLEOTIDE SEQUENCE [LARGE SCALE MRNA]</scope>
    <scope>VARIANTS HIS-37 AND PRO-180</scope>
    <source>
        <tissue>Brain</tissue>
    </source>
</reference>
<reference key="3">
    <citation type="journal article" date="2004" name="Nat. Genet.">
        <title>Complete sequencing and characterization of 21,243 full-length human cDNAs.</title>
        <authorList>
            <person name="Ota T."/>
            <person name="Suzuki Y."/>
            <person name="Nishikawa T."/>
            <person name="Otsuki T."/>
            <person name="Sugiyama T."/>
            <person name="Irie R."/>
            <person name="Wakamatsu A."/>
            <person name="Hayashi K."/>
            <person name="Sato H."/>
            <person name="Nagai K."/>
            <person name="Kimura K."/>
            <person name="Makita H."/>
            <person name="Sekine M."/>
            <person name="Obayashi M."/>
            <person name="Nishi T."/>
            <person name="Shibahara T."/>
            <person name="Tanaka T."/>
            <person name="Ishii S."/>
            <person name="Yamamoto J."/>
            <person name="Saito K."/>
            <person name="Kawai Y."/>
            <person name="Isono Y."/>
            <person name="Nakamura Y."/>
            <person name="Nagahari K."/>
            <person name="Murakami K."/>
            <person name="Yasuda T."/>
            <person name="Iwayanagi T."/>
            <person name="Wagatsuma M."/>
            <person name="Shiratori A."/>
            <person name="Sudo H."/>
            <person name="Hosoiri T."/>
            <person name="Kaku Y."/>
            <person name="Kodaira H."/>
            <person name="Kondo H."/>
            <person name="Sugawara M."/>
            <person name="Takahashi M."/>
            <person name="Kanda K."/>
            <person name="Yokoi T."/>
            <person name="Furuya T."/>
            <person name="Kikkawa E."/>
            <person name="Omura Y."/>
            <person name="Abe K."/>
            <person name="Kamihara K."/>
            <person name="Katsuta N."/>
            <person name="Sato K."/>
            <person name="Tanikawa M."/>
            <person name="Yamazaki M."/>
            <person name="Ninomiya K."/>
            <person name="Ishibashi T."/>
            <person name="Yamashita H."/>
            <person name="Murakawa K."/>
            <person name="Fujimori K."/>
            <person name="Tanai H."/>
            <person name="Kimata M."/>
            <person name="Watanabe M."/>
            <person name="Hiraoka S."/>
            <person name="Chiba Y."/>
            <person name="Ishida S."/>
            <person name="Ono Y."/>
            <person name="Takiguchi S."/>
            <person name="Watanabe S."/>
            <person name="Yosida M."/>
            <person name="Hotuta T."/>
            <person name="Kusano J."/>
            <person name="Kanehori K."/>
            <person name="Takahashi-Fujii A."/>
            <person name="Hara H."/>
            <person name="Tanase T.-O."/>
            <person name="Nomura Y."/>
            <person name="Togiya S."/>
            <person name="Komai F."/>
            <person name="Hara R."/>
            <person name="Takeuchi K."/>
            <person name="Arita M."/>
            <person name="Imose N."/>
            <person name="Musashino K."/>
            <person name="Yuuki H."/>
            <person name="Oshima A."/>
            <person name="Sasaki N."/>
            <person name="Aotsuka S."/>
            <person name="Yoshikawa Y."/>
            <person name="Matsunawa H."/>
            <person name="Ichihara T."/>
            <person name="Shiohata N."/>
            <person name="Sano S."/>
            <person name="Moriya S."/>
            <person name="Momiyama H."/>
            <person name="Satoh N."/>
            <person name="Takami S."/>
            <person name="Terashima Y."/>
            <person name="Suzuki O."/>
            <person name="Nakagawa S."/>
            <person name="Senoh A."/>
            <person name="Mizoguchi H."/>
            <person name="Goto Y."/>
            <person name="Shimizu F."/>
            <person name="Wakebe H."/>
            <person name="Hishigaki H."/>
            <person name="Watanabe T."/>
            <person name="Sugiyama A."/>
            <person name="Takemoto M."/>
            <person name="Kawakami B."/>
            <person name="Yamazaki M."/>
            <person name="Watanabe K."/>
            <person name="Kumagai A."/>
            <person name="Itakura S."/>
            <person name="Fukuzumi Y."/>
            <person name="Fujimori Y."/>
            <person name="Komiyama M."/>
            <person name="Tashiro H."/>
            <person name="Tanigami A."/>
            <person name="Fujiwara T."/>
            <person name="Ono T."/>
            <person name="Yamada K."/>
            <person name="Fujii Y."/>
            <person name="Ozaki K."/>
            <person name="Hirao M."/>
            <person name="Ohmori Y."/>
            <person name="Kawabata A."/>
            <person name="Hikiji T."/>
            <person name="Kobatake N."/>
            <person name="Inagaki H."/>
            <person name="Ikema Y."/>
            <person name="Okamoto S."/>
            <person name="Okitani R."/>
            <person name="Kawakami T."/>
            <person name="Noguchi S."/>
            <person name="Itoh T."/>
            <person name="Shigeta K."/>
            <person name="Senba T."/>
            <person name="Matsumura K."/>
            <person name="Nakajima Y."/>
            <person name="Mizuno T."/>
            <person name="Morinaga M."/>
            <person name="Sasaki M."/>
            <person name="Togashi T."/>
            <person name="Oyama M."/>
            <person name="Hata H."/>
            <person name="Watanabe M."/>
            <person name="Komatsu T."/>
            <person name="Mizushima-Sugano J."/>
            <person name="Satoh T."/>
            <person name="Shirai Y."/>
            <person name="Takahashi Y."/>
            <person name="Nakagawa K."/>
            <person name="Okumura K."/>
            <person name="Nagase T."/>
            <person name="Nomura N."/>
            <person name="Kikuchi H."/>
            <person name="Masuho Y."/>
            <person name="Yamashita R."/>
            <person name="Nakai K."/>
            <person name="Yada T."/>
            <person name="Nakamura Y."/>
            <person name="Ohara O."/>
            <person name="Isogai T."/>
            <person name="Sugano S."/>
        </authorList>
    </citation>
    <scope>NUCLEOTIDE SEQUENCE [LARGE SCALE MRNA] OF 24-551</scope>
    <scope>VARIANTS HIS-37 AND PRO-180</scope>
</reference>
<reference key="4">
    <citation type="journal article" date="2002" name="EMBO J.">
        <title>Holliday junction resolution in human cells: two junction endonucleases with distinct substrate specificities.</title>
        <authorList>
            <person name="Constantinou A."/>
            <person name="Chen X.-B."/>
            <person name="McGowan C.H."/>
            <person name="West S.C."/>
        </authorList>
    </citation>
    <scope>FUNCTION</scope>
</reference>
<reference key="5">
    <citation type="journal article" date="2003" name="J. Biol. Chem.">
        <title>Identification and characterization of human MUS81-MMS4 structure-specific endonuclease.</title>
        <authorList>
            <person name="Oegruenc M."/>
            <person name="Sancar A."/>
        </authorList>
    </citation>
    <scope>FUNCTION</scope>
    <scope>INTERACTION WITH EME1</scope>
</reference>
<reference key="6">
    <citation type="journal article" date="2003" name="J. Biol. Chem.">
        <title>Identification and characterization of the human mus81-eme1 endonuclease.</title>
        <authorList>
            <person name="Ciccia A."/>
            <person name="Constantinou A."/>
            <person name="West S.C."/>
        </authorList>
    </citation>
    <scope>FUNCTION</scope>
    <scope>INTERACTION WITH EME1</scope>
</reference>
<reference key="7">
    <citation type="journal article" date="2003" name="Mol. Biol. Cell">
        <title>Mus81 endonuclease localizes to nucleoli and to regions of DNA damage in human S-phase cells.</title>
        <authorList>
            <person name="Gao H."/>
            <person name="Chen X.-B."/>
            <person name="McGowan C.H."/>
        </authorList>
    </citation>
    <scope>SUBCELLULAR LOCATION</scope>
    <scope>DEVELOPMENTAL STAGE</scope>
</reference>
<reference key="8">
    <citation type="journal article" date="2004" name="Mol. Biol. Cell">
        <title>RNA interference inhibition of Mus81 reduces mitotic recombination in human cells.</title>
        <authorList>
            <person name="Blais V."/>
            <person name="Gao H."/>
            <person name="Elwell C.A."/>
            <person name="Boddy M.N."/>
            <person name="Gaillard P.-H.L."/>
            <person name="Russell P."/>
            <person name="McGowan C.H."/>
        </authorList>
    </citation>
    <scope>FUNCTION</scope>
    <scope>INTERACTION WITH EME1</scope>
    <scope>SUBCELLULAR LOCATION</scope>
    <scope>MUTAGENESIS OF 338-ASP-ASP-339</scope>
</reference>
<reference key="9">
    <citation type="journal article" date="2005" name="Cancer Res.">
        <title>BLM helicase facilitates Mus81 endonuclease activity in human cells.</title>
        <authorList>
            <person name="Zhang R."/>
            <person name="Sengupta S."/>
            <person name="Yang Q."/>
            <person name="Linke S.P."/>
            <person name="Yanaihara N."/>
            <person name="Bradsher J."/>
            <person name="Blais V."/>
            <person name="McGowan C.H."/>
            <person name="Harris C.C."/>
        </authorList>
    </citation>
    <scope>FUNCTION</scope>
    <scope>INTERACTION WITH BLM</scope>
    <scope>SUBCELLULAR LOCATION</scope>
</reference>
<reference key="10">
    <citation type="journal article" date="2007" name="Mol. Cell">
        <title>Identification of FAAP24, a Fanconi anemia core complex protein that interacts with FANCM.</title>
        <authorList>
            <person name="Ciccia A."/>
            <person name="Ling C."/>
            <person name="Coulthard R."/>
            <person name="Yan Z."/>
            <person name="Xue Y."/>
            <person name="Meetei A.R."/>
            <person name="Laghmani el H."/>
            <person name="Joenje H."/>
            <person name="McDonald N."/>
            <person name="de Winter J.P."/>
            <person name="Wang W."/>
            <person name="West S.C."/>
        </authorList>
    </citation>
    <scope>INTERACTION WITH EME1 AND EME2</scope>
</reference>
<reference key="11">
    <citation type="journal article" date="2008" name="J. Proteome Res.">
        <title>Combining protein-based IMAC, peptide-based IMAC, and MudPIT for efficient phosphoproteomic analysis.</title>
        <authorList>
            <person name="Cantin G.T."/>
            <person name="Yi W."/>
            <person name="Lu B."/>
            <person name="Park S.K."/>
            <person name="Xu T."/>
            <person name="Lee J.-D."/>
            <person name="Yates J.R. III"/>
        </authorList>
    </citation>
    <scope>IDENTIFICATION BY MASS SPECTROMETRY [LARGE SCALE ANALYSIS]</scope>
    <source>
        <tissue>Cervix carcinoma</tissue>
    </source>
</reference>
<reference key="12">
    <citation type="journal article" date="2008" name="Oncogene">
        <title>Snm1B/Apollo mediates replication fork collapse and S Phase checkpoint activation in response to DNA interstrand cross-links.</title>
        <authorList>
            <person name="Bae J.B."/>
            <person name="Mukhopadhyay S.S."/>
            <person name="Liu L."/>
            <person name="Zhang N."/>
            <person name="Tan J."/>
            <person name="Akhter S."/>
            <person name="Liu X."/>
            <person name="Shen X."/>
            <person name="Li L."/>
            <person name="Legerski R.J."/>
        </authorList>
    </citation>
    <scope>INTERACTION WITH DCLRE1B</scope>
</reference>
<reference key="13">
    <citation type="journal article" date="2008" name="Proc. Natl. Acad. Sci. U.S.A.">
        <title>A quantitative atlas of mitotic phosphorylation.</title>
        <authorList>
            <person name="Dephoure N."/>
            <person name="Zhou C."/>
            <person name="Villen J."/>
            <person name="Beausoleil S.A."/>
            <person name="Bakalarski C.E."/>
            <person name="Elledge S.J."/>
            <person name="Gygi S.P."/>
        </authorList>
    </citation>
    <scope>IDENTIFICATION BY MASS SPECTROMETRY [LARGE SCALE ANALYSIS]</scope>
    <source>
        <tissue>Cervix carcinoma</tissue>
    </source>
</reference>
<reference key="14">
    <citation type="journal article" date="2009" name="Mol. Cell">
        <title>Coordination of structure-specific nucleases by human SLX4/BTBD12 is required for DNA repair.</title>
        <authorList>
            <person name="Munoz I.M."/>
            <person name="Hain K."/>
            <person name="Declais A.-C."/>
            <person name="Gardiner M."/>
            <person name="Toh G.W."/>
            <person name="Sanchez-Pulido L."/>
            <person name="Heuckmann J.M."/>
            <person name="Toth R."/>
            <person name="Macartney T."/>
            <person name="Eppink B."/>
            <person name="Kanaar R."/>
            <person name="Ponting C.P."/>
            <person name="Lilley D.M.J."/>
            <person name="Rouse J."/>
        </authorList>
    </citation>
    <scope>INTERACTION WITH SLX4</scope>
</reference>
<reference key="15">
    <citation type="journal article" date="2009" name="Cell">
        <title>Mammalian BTBD12/SLX4 assembles a Holliday junction resolvase and is required for DNA repair.</title>
        <authorList>
            <person name="Svendsen J.M."/>
            <person name="Smogorzewska A."/>
            <person name="Sowa M.E."/>
            <person name="O'Connell B.C."/>
            <person name="Gygi S.P."/>
            <person name="Elledge S.J."/>
            <person name="Harper J.W."/>
        </authorList>
    </citation>
    <scope>INTERACTION WITH SLX4</scope>
</reference>
<reference key="16">
    <citation type="journal article" date="2009" name="Cell">
        <title>Human SLX4 is a Holliday junction resolvase subunit that binds multiple DNA repair/recombination endonucleases.</title>
        <authorList>
            <person name="Fekairi S."/>
            <person name="Scaglione S."/>
            <person name="Chahwan C."/>
            <person name="Taylor E.R."/>
            <person name="Tissier A."/>
            <person name="Coulon S."/>
            <person name="Dong M.-Q."/>
            <person name="Ruse C."/>
            <person name="Yates J.R. III"/>
            <person name="Russell P."/>
            <person name="Fuchs R.P."/>
            <person name="McGowan C.H."/>
            <person name="Gaillard P.-H.L."/>
        </authorList>
    </citation>
    <scope>INTERACTION WITH SLX4</scope>
</reference>
<reference key="17">
    <citation type="journal article" date="2009" name="Sci. Signal.">
        <title>Quantitative phosphoproteomic analysis of T cell receptor signaling reveals system-wide modulation of protein-protein interactions.</title>
        <authorList>
            <person name="Mayya V."/>
            <person name="Lundgren D.H."/>
            <person name="Hwang S.-I."/>
            <person name="Rezaul K."/>
            <person name="Wu L."/>
            <person name="Eng J.K."/>
            <person name="Rodionov V."/>
            <person name="Han D.K."/>
        </authorList>
    </citation>
    <scope>IDENTIFICATION BY MASS SPECTROMETRY [LARGE SCALE ANALYSIS]</scope>
    <source>
        <tissue>Leukemic T-cell</tissue>
    </source>
</reference>
<reference key="18">
    <citation type="journal article" date="2013" name="J. Proteome Res.">
        <title>Toward a comprehensive characterization of a human cancer cell phosphoproteome.</title>
        <authorList>
            <person name="Zhou H."/>
            <person name="Di Palma S."/>
            <person name="Preisinger C."/>
            <person name="Peng M."/>
            <person name="Polat A.N."/>
            <person name="Heck A.J."/>
            <person name="Mohammed S."/>
        </authorList>
    </citation>
    <scope>PHOSPHORYLATION [LARGE SCALE ANALYSIS] AT SER-95 AND SER-101</scope>
    <scope>IDENTIFICATION BY MASS SPECTROMETRY [LARGE SCALE ANALYSIS]</scope>
    <source>
        <tissue>Cervix carcinoma</tissue>
        <tissue>Erythroleukemia</tissue>
    </source>
</reference>
<reference key="19">
    <citation type="journal article" date="2014" name="Cell Rep.">
        <title>MUS81-EME2 promotes replication fork restart.</title>
        <authorList>
            <person name="Pepe A."/>
            <person name="West S.C."/>
        </authorList>
    </citation>
    <scope>FUNCTION</scope>
    <scope>SUBUNIT</scope>
</reference>
<reference key="20">
    <citation type="journal article" date="2014" name="Nucleic Acids Res.">
        <title>Substrate specificity of the MUS81-EME2 structure selective endonuclease.</title>
        <authorList>
            <person name="Pepe A."/>
            <person name="West S.C."/>
        </authorList>
    </citation>
    <scope>FUNCTION</scope>
    <scope>SUBSTRATE SPECIFICITY</scope>
</reference>
<reference key="21">
    <citation type="journal article" date="2017" name="Mol. Cell">
        <title>RECQ5 Helicase Cooperates with MUS81 Endonuclease in Processing Stalled Replication Forks at Common Fragile Sites during Mitosis.</title>
        <authorList>
            <person name="Di Marco S."/>
            <person name="Hasanova Z."/>
            <person name="Kanagaraj R."/>
            <person name="Chappidi N."/>
            <person name="Altmannova V."/>
            <person name="Menon S."/>
            <person name="Sedlackova H."/>
            <person name="Langhoff J."/>
            <person name="Surendranath K."/>
            <person name="Huehn D."/>
            <person name="Bhowmick R."/>
            <person name="Marini V."/>
            <person name="Ferrari S."/>
            <person name="Hickson I.D."/>
            <person name="Krejci L."/>
            <person name="Janscak P."/>
        </authorList>
    </citation>
    <scope>INTERACTION WITH RECQL5</scope>
</reference>
<reference evidence="27 28 29 30" key="22">
    <citation type="journal article" date="2014" name="EMBO J.">
        <title>Crystal structures of the structure-selective nuclease Mus81-Eme1 bound to flap DNA substrates.</title>
        <authorList>
            <person name="Gwon G.H."/>
            <person name="Jo A."/>
            <person name="Baek K."/>
            <person name="Jin K.S."/>
            <person name="Fu Y."/>
            <person name="Lee J.B."/>
            <person name="Kim Y."/>
            <person name="Cho Y."/>
        </authorList>
    </citation>
    <scope>X-RAY CRYSTALLOGRAPHY (2.80 ANGSTROMS) OF 246-551 IN COMPLEX WITH EME1; DNA SUBSTRATE AND MG(2+)</scope>
    <scope>FUNCTION</scope>
    <scope>COFACTOR</scope>
    <scope>ACTIVE SITE</scope>
    <scope>REGION</scope>
    <scope>MUTAGENESIS OF ASP-274; GLU-277; ASP-307; ILE-344; ILE-345; THR-383; ALA-387; ARG-483; LYS-489 AND ARG-530</scope>
</reference>
<reference evidence="31" key="23">
    <citation type="journal article" date="2022" name="Structure">
        <title>Crystal structure of the human MUS81-EME2 complex.</title>
        <authorList>
            <person name="Hua Z."/>
            <person name="Fang Q."/>
            <person name="Zhang D."/>
            <person name="Luo Z."/>
            <person name="Yuan C."/>
            <person name="Lin Z."/>
        </authorList>
    </citation>
    <scope>X-RAY CRYSTALLOGRAPHY (3.20 ANGSTROMS) OF 246-551 IN COMPLEX WITH EME2</scope>
    <scope>FUNCTION</scope>
    <scope>SUBSTRATE SPECIFICITY</scope>
    <scope>REGION</scope>
    <scope>ACTIVE SITE</scope>
    <scope>MUTAGENESIS OF ARG-186; ARG-191; ASP-274; GLU-277; ASP-307; ARG-348 AND ARG-355</scope>
</reference>
<reference evidence="32 33 34 35 36 37" key="24">
    <citation type="journal article" date="2024" name="ACS Med. Chem. Lett.">
        <title>Fragment-Based Discovery of Novel MUS81 Inhibitors.</title>
        <authorList>
            <person name="Collie G.W."/>
            <person name="Borjesson U."/>
            <person name="Chen Y."/>
            <person name="Dong Z."/>
            <person name="Di Fruscia P."/>
            <person name="Gohlke A."/>
            <person name="Hoyle A."/>
            <person name="Hunt T.A."/>
            <person name="Jesani M.H."/>
            <person name="Luo H."/>
            <person name="Luptak J."/>
            <person name="Milbradt A.G."/>
            <person name="Narasimhan P."/>
            <person name="Packer M."/>
            <person name="Patel S."/>
            <person name="Qiao J."/>
            <person name="Storer R.I."/>
            <person name="Stubbs C.J."/>
            <person name="Tart J."/>
            <person name="Truman C."/>
            <person name="Wang A.T."/>
            <person name="Wheeler M.G."/>
            <person name="Winter-Holt J."/>
        </authorList>
    </citation>
    <scope>X-RAY CRYSTALLOGRAPHY (2.02 ANGSTROMS) OF 246-551 IN COMPLEX WITH EME1 AND MG(2+) AND INHIBITORS</scope>
    <scope>FUNCTION</scope>
    <scope>COFACTOR</scope>
</reference>
<protein>
    <recommendedName>
        <fullName evidence="25">Structure-specific endonuclease subunit MUS81</fullName>
        <ecNumber evidence="21">3.1.22.-</ecNumber>
    </recommendedName>
    <alternativeName>
        <fullName>Crossover junction endonuclease MUS81</fullName>
    </alternativeName>
    <alternativeName>
        <fullName evidence="26">MUS81 endonuclease homolog</fullName>
    </alternativeName>
</protein>
<gene>
    <name evidence="23 26" type="primary">MUS81</name>
</gene>
<organism>
    <name type="scientific">Homo sapiens</name>
    <name type="common">Human</name>
    <dbReference type="NCBI Taxonomy" id="9606"/>
    <lineage>
        <taxon>Eukaryota</taxon>
        <taxon>Metazoa</taxon>
        <taxon>Chordata</taxon>
        <taxon>Craniata</taxon>
        <taxon>Vertebrata</taxon>
        <taxon>Euteleostomi</taxon>
        <taxon>Mammalia</taxon>
        <taxon>Eutheria</taxon>
        <taxon>Euarchontoglires</taxon>
        <taxon>Primates</taxon>
        <taxon>Haplorrhini</taxon>
        <taxon>Catarrhini</taxon>
        <taxon>Hominidae</taxon>
        <taxon>Homo</taxon>
    </lineage>
</organism>